<protein>
    <recommendedName>
        <fullName>Protein transport protein SFT2</fullName>
    </recommendedName>
</protein>
<feature type="initiator methionine" description="Removed" evidence="6">
    <location>
        <position position="1"/>
    </location>
</feature>
<feature type="chain" id="PRO_0000097713" description="Protein transport protein SFT2">
    <location>
        <begin position="2"/>
        <end position="215"/>
    </location>
</feature>
<feature type="topological domain" description="Cytoplasmic" evidence="1">
    <location>
        <begin position="2"/>
        <end position="81"/>
    </location>
</feature>
<feature type="transmembrane region" description="Helical; Name=1" evidence="1">
    <location>
        <begin position="82"/>
        <end position="102"/>
    </location>
</feature>
<feature type="topological domain" description="Lumenal" evidence="1">
    <location>
        <begin position="103"/>
        <end position="111"/>
    </location>
</feature>
<feature type="transmembrane region" description="Helical; Name=2" evidence="1">
    <location>
        <begin position="112"/>
        <end position="132"/>
    </location>
</feature>
<feature type="topological domain" description="Cytoplasmic" evidence="1">
    <location>
        <begin position="133"/>
        <end position="145"/>
    </location>
</feature>
<feature type="transmembrane region" description="Helical; Name=3" evidence="1">
    <location>
        <begin position="146"/>
        <end position="166"/>
    </location>
</feature>
<feature type="topological domain" description="Lumenal" evidence="1">
    <location>
        <begin position="167"/>
        <end position="172"/>
    </location>
</feature>
<feature type="transmembrane region" description="Helical; Name=4" evidence="1">
    <location>
        <begin position="173"/>
        <end position="193"/>
    </location>
</feature>
<feature type="topological domain" description="Cytoplasmic" evidence="1">
    <location>
        <begin position="194"/>
        <end position="215"/>
    </location>
</feature>
<feature type="modified residue" description="N-acetylserine" evidence="6">
    <location>
        <position position="2"/>
    </location>
</feature>
<feature type="modified residue" description="Phosphoserine" evidence="5">
    <location>
        <position position="60"/>
    </location>
</feature>
<sequence>MSEEPPSDQVNSLRDSLNRWNQTRQQNSQGFNESAKTLFSSWADSLNTRAQDIYQTLPVSRQDLVQDQEPSWFQLSRTERMVLFVCFLLGATACFTLCTFLFPVLAAKPRKFGLLWTMGSLLFVLAFGVLMGPLAYLKHLTARERLPFSMFFFATCFMTIYFAAFSKNTVLTITCALLELVAVIYYAISYFPFGATGLRMLSSAGVNSARGVLRI</sequence>
<gene>
    <name type="primary">SFT2</name>
    <name type="ordered locus">YBL102W</name>
    <name type="ORF">YBL0812</name>
</gene>
<reference key="1">
    <citation type="journal article" date="1995" name="Yeast">
        <title>Sequence analysis of a 78.6 kb segment of the left end of Saccharomyces cerevisiae chromosome II.</title>
        <authorList>
            <person name="Obermaier B."/>
            <person name="Gassenhuber J."/>
            <person name="Piravandi E."/>
            <person name="Domdey H."/>
        </authorList>
    </citation>
    <scope>NUCLEOTIDE SEQUENCE [GENOMIC DNA]</scope>
    <source>
        <strain>ATCC 204508 / S288c</strain>
    </source>
</reference>
<reference key="2">
    <citation type="journal article" date="1994" name="EMBO J.">
        <title>Complete DNA sequence of yeast chromosome II.</title>
        <authorList>
            <person name="Feldmann H."/>
            <person name="Aigle M."/>
            <person name="Aljinovic G."/>
            <person name="Andre B."/>
            <person name="Baclet M.C."/>
            <person name="Barthe C."/>
            <person name="Baur A."/>
            <person name="Becam A.-M."/>
            <person name="Biteau N."/>
            <person name="Boles E."/>
            <person name="Brandt T."/>
            <person name="Brendel M."/>
            <person name="Brueckner M."/>
            <person name="Bussereau F."/>
            <person name="Christiansen C."/>
            <person name="Contreras R."/>
            <person name="Crouzet M."/>
            <person name="Cziepluch C."/>
            <person name="Demolis N."/>
            <person name="Delaveau T."/>
            <person name="Doignon F."/>
            <person name="Domdey H."/>
            <person name="Duesterhus S."/>
            <person name="Dubois E."/>
            <person name="Dujon B."/>
            <person name="El Bakkoury M."/>
            <person name="Entian K.-D."/>
            <person name="Feuermann M."/>
            <person name="Fiers W."/>
            <person name="Fobo G.M."/>
            <person name="Fritz C."/>
            <person name="Gassenhuber J."/>
            <person name="Glansdorff N."/>
            <person name="Goffeau A."/>
            <person name="Grivell L.A."/>
            <person name="de Haan M."/>
            <person name="Hein C."/>
            <person name="Herbert C.J."/>
            <person name="Hollenberg C.P."/>
            <person name="Holmstroem K."/>
            <person name="Jacq C."/>
            <person name="Jacquet M."/>
            <person name="Jauniaux J.-C."/>
            <person name="Jonniaux J.-L."/>
            <person name="Kallesoee T."/>
            <person name="Kiesau P."/>
            <person name="Kirchrath L."/>
            <person name="Koetter P."/>
            <person name="Korol S."/>
            <person name="Liebl S."/>
            <person name="Logghe M."/>
            <person name="Lohan A.J.E."/>
            <person name="Louis E.J."/>
            <person name="Li Z.Y."/>
            <person name="Maat M.J."/>
            <person name="Mallet L."/>
            <person name="Mannhaupt G."/>
            <person name="Messenguy F."/>
            <person name="Miosga T."/>
            <person name="Molemans F."/>
            <person name="Mueller S."/>
            <person name="Nasr F."/>
            <person name="Obermaier B."/>
            <person name="Perea J."/>
            <person name="Pierard A."/>
            <person name="Piravandi E."/>
            <person name="Pohl F.M."/>
            <person name="Pohl T.M."/>
            <person name="Potier S."/>
            <person name="Proft M."/>
            <person name="Purnelle B."/>
            <person name="Ramezani Rad M."/>
            <person name="Rieger M."/>
            <person name="Rose M."/>
            <person name="Schaaff-Gerstenschlaeger I."/>
            <person name="Scherens B."/>
            <person name="Schwarzlose C."/>
            <person name="Skala J."/>
            <person name="Slonimski P.P."/>
            <person name="Smits P.H.M."/>
            <person name="Souciet J.-L."/>
            <person name="Steensma H.Y."/>
            <person name="Stucka R."/>
            <person name="Urrestarazu L.A."/>
            <person name="van der Aart Q.J.M."/>
            <person name="Van Dyck L."/>
            <person name="Vassarotti A."/>
            <person name="Vetter I."/>
            <person name="Vierendeels F."/>
            <person name="Vissers S."/>
            <person name="Wagner G."/>
            <person name="de Wergifosse P."/>
            <person name="Wolfe K.H."/>
            <person name="Zagulski M."/>
            <person name="Zimmermann F.K."/>
            <person name="Mewes H.-W."/>
            <person name="Kleine K."/>
        </authorList>
    </citation>
    <scope>NUCLEOTIDE SEQUENCE [LARGE SCALE GENOMIC DNA]</scope>
    <source>
        <strain>ATCC 204508 / S288c</strain>
    </source>
</reference>
<reference key="3">
    <citation type="journal article" date="2014" name="G3 (Bethesda)">
        <title>The reference genome sequence of Saccharomyces cerevisiae: Then and now.</title>
        <authorList>
            <person name="Engel S.R."/>
            <person name="Dietrich F.S."/>
            <person name="Fisk D.G."/>
            <person name="Binkley G."/>
            <person name="Balakrishnan R."/>
            <person name="Costanzo M.C."/>
            <person name="Dwight S.S."/>
            <person name="Hitz B.C."/>
            <person name="Karra K."/>
            <person name="Nash R.S."/>
            <person name="Weng S."/>
            <person name="Wong E.D."/>
            <person name="Lloyd P."/>
            <person name="Skrzypek M.S."/>
            <person name="Miyasato S.R."/>
            <person name="Simison M."/>
            <person name="Cherry J.M."/>
        </authorList>
    </citation>
    <scope>GENOME REANNOTATION</scope>
    <source>
        <strain>ATCC 204508 / S288c</strain>
    </source>
</reference>
<reference key="4">
    <citation type="journal article" date="2007" name="Genome Res.">
        <title>Approaching a complete repository of sequence-verified protein-encoding clones for Saccharomyces cerevisiae.</title>
        <authorList>
            <person name="Hu Y."/>
            <person name="Rolfs A."/>
            <person name="Bhullar B."/>
            <person name="Murthy T.V.S."/>
            <person name="Zhu C."/>
            <person name="Berger M.F."/>
            <person name="Camargo A.A."/>
            <person name="Kelley F."/>
            <person name="McCarron S."/>
            <person name="Jepson D."/>
            <person name="Richardson A."/>
            <person name="Raphael J."/>
            <person name="Moreira D."/>
            <person name="Taycher E."/>
            <person name="Zuo D."/>
            <person name="Mohr S."/>
            <person name="Kane M.F."/>
            <person name="Williamson J."/>
            <person name="Simpson A.J.G."/>
            <person name="Bulyk M.L."/>
            <person name="Harlow E."/>
            <person name="Marsischky G."/>
            <person name="Kolodner R.D."/>
            <person name="LaBaer J."/>
        </authorList>
    </citation>
    <scope>NUCLEOTIDE SEQUENCE [GENOMIC DNA]</scope>
    <source>
        <strain>ATCC 204508 / S288c</strain>
    </source>
</reference>
<reference key="5">
    <citation type="journal article" date="1995" name="Nature">
        <title>A SNARE-like protein required for traffic through the Golgi complex.</title>
        <authorList>
            <person name="Banfield D.K."/>
            <person name="Lewis M.J."/>
            <person name="Pelham H.R.B."/>
        </authorList>
    </citation>
    <scope>IDENTIFICATION</scope>
</reference>
<reference key="6">
    <citation type="journal article" date="1999" name="EMBO J.">
        <title>Got1p and Sft2p: membrane proteins involved in traffic to the Golgi complex.</title>
        <authorList>
            <person name="Conchon S."/>
            <person name="Cao X."/>
            <person name="Barlowe C."/>
            <person name="Pelham H.R."/>
        </authorList>
    </citation>
    <scope>FUNCTION</scope>
    <scope>SUBCELLULAR LOCATION</scope>
    <scope>TOPOLOGY</scope>
    <scope>DISRUPTION PHENOTYPE</scope>
</reference>
<reference key="7">
    <citation type="journal article" date="2003" name="Nature">
        <title>Global analysis of protein expression in yeast.</title>
        <authorList>
            <person name="Ghaemmaghami S."/>
            <person name="Huh W.-K."/>
            <person name="Bower K."/>
            <person name="Howson R.W."/>
            <person name="Belle A."/>
            <person name="Dephoure N."/>
            <person name="O'Shea E.K."/>
            <person name="Weissman J.S."/>
        </authorList>
    </citation>
    <scope>LEVEL OF PROTEIN EXPRESSION [LARGE SCALE ANALYSIS]</scope>
</reference>
<reference key="8">
    <citation type="journal article" date="2006" name="Proc. Natl. Acad. Sci. U.S.A.">
        <title>A global topology map of the Saccharomyces cerevisiae membrane proteome.</title>
        <authorList>
            <person name="Kim H."/>
            <person name="Melen K."/>
            <person name="Oesterberg M."/>
            <person name="von Heijne G."/>
        </authorList>
    </citation>
    <scope>TOPOLOGY [LARGE SCALE ANALYSIS]</scope>
    <source>
        <strain>ATCC 208353 / W303-1A</strain>
    </source>
</reference>
<reference key="9">
    <citation type="journal article" date="2008" name="Mol. Cell. Proteomics">
        <title>A multidimensional chromatography technology for in-depth phosphoproteome analysis.</title>
        <authorList>
            <person name="Albuquerque C.P."/>
            <person name="Smolka M.B."/>
            <person name="Payne S.H."/>
            <person name="Bafna V."/>
            <person name="Eng J."/>
            <person name="Zhou H."/>
        </authorList>
    </citation>
    <scope>PHOSPHORYLATION [LARGE SCALE ANALYSIS] AT SER-60</scope>
    <scope>IDENTIFICATION BY MASS SPECTROMETRY [LARGE SCALE ANALYSIS]</scope>
</reference>
<reference key="10">
    <citation type="journal article" date="2012" name="Proc. Natl. Acad. Sci. U.S.A.">
        <title>N-terminal acetylome analyses and functional insights of the N-terminal acetyltransferase NatB.</title>
        <authorList>
            <person name="Van Damme P."/>
            <person name="Lasa M."/>
            <person name="Polevoda B."/>
            <person name="Gazquez C."/>
            <person name="Elosegui-Artola A."/>
            <person name="Kim D.S."/>
            <person name="De Juan-Pardo E."/>
            <person name="Demeyer K."/>
            <person name="Hole K."/>
            <person name="Larrea E."/>
            <person name="Timmerman E."/>
            <person name="Prieto J."/>
            <person name="Arnesen T."/>
            <person name="Sherman F."/>
            <person name="Gevaert K."/>
            <person name="Aldabe R."/>
        </authorList>
    </citation>
    <scope>ACETYLATION [LARGE SCALE ANALYSIS] AT SER-2</scope>
    <scope>CLEAVAGE OF INITIATOR METHIONINE [LARGE SCALE ANALYSIS]</scope>
    <scope>IDENTIFICATION BY MASS SPECTROMETRY [LARGE SCALE ANALYSIS]</scope>
</reference>
<accession>P38166</accession>
<accession>D6VPQ1</accession>
<organism>
    <name type="scientific">Saccharomyces cerevisiae (strain ATCC 204508 / S288c)</name>
    <name type="common">Baker's yeast</name>
    <dbReference type="NCBI Taxonomy" id="559292"/>
    <lineage>
        <taxon>Eukaryota</taxon>
        <taxon>Fungi</taxon>
        <taxon>Dikarya</taxon>
        <taxon>Ascomycota</taxon>
        <taxon>Saccharomycotina</taxon>
        <taxon>Saccharomycetes</taxon>
        <taxon>Saccharomycetales</taxon>
        <taxon>Saccharomycetaceae</taxon>
        <taxon>Saccharomyces</taxon>
    </lineage>
</organism>
<comment type="function">
    <text evidence="2">Nonessential protein required for the fusion of transport vesicles derived from the endocytic pathway with the Golgi complex. Can be partially replaced by GOT1.</text>
</comment>
<comment type="subcellular location">
    <subcellularLocation>
        <location evidence="2">Golgi apparatus membrane</location>
        <topology evidence="2">Multi-pass membrane protein</topology>
    </subcellularLocation>
</comment>
<comment type="disruption phenotype">
    <text evidence="2">Lack of SFT2 is lethal in a strain lacking GOT1.</text>
</comment>
<comment type="miscellaneous">
    <text evidence="3">Present with 279 molecules/cell in log phase SD medium.</text>
</comment>
<comment type="similarity">
    <text evidence="4">Belongs to the SFT2 family.</text>
</comment>
<name>SFT2_YEAST</name>
<dbReference type="EMBL" id="X79489">
    <property type="protein sequence ID" value="CAA55993.1"/>
    <property type="molecule type" value="Genomic_DNA"/>
</dbReference>
<dbReference type="EMBL" id="Z35863">
    <property type="protein sequence ID" value="CAA84928.1"/>
    <property type="molecule type" value="Genomic_DNA"/>
</dbReference>
<dbReference type="EMBL" id="AY558550">
    <property type="protein sequence ID" value="AAS56876.1"/>
    <property type="molecule type" value="Genomic_DNA"/>
</dbReference>
<dbReference type="EMBL" id="BK006936">
    <property type="protein sequence ID" value="DAA07021.1"/>
    <property type="molecule type" value="Genomic_DNA"/>
</dbReference>
<dbReference type="PIR" id="S45393">
    <property type="entry name" value="S45393"/>
</dbReference>
<dbReference type="RefSeq" id="NP_009448.1">
    <property type="nucleotide sequence ID" value="NM_001178342.1"/>
</dbReference>
<dbReference type="BioGRID" id="32601">
    <property type="interactions" value="206"/>
</dbReference>
<dbReference type="DIP" id="DIP-1865N"/>
<dbReference type="FunCoup" id="P38166">
    <property type="interactions" value="817"/>
</dbReference>
<dbReference type="IntAct" id="P38166">
    <property type="interactions" value="22"/>
</dbReference>
<dbReference type="MINT" id="P38166"/>
<dbReference type="STRING" id="4932.YBL102W"/>
<dbReference type="iPTMnet" id="P38166"/>
<dbReference type="PaxDb" id="4932-YBL102W"/>
<dbReference type="PeptideAtlas" id="P38166"/>
<dbReference type="EnsemblFungi" id="YBL102W_mRNA">
    <property type="protein sequence ID" value="YBL102W"/>
    <property type="gene ID" value="YBL102W"/>
</dbReference>
<dbReference type="GeneID" id="852172"/>
<dbReference type="KEGG" id="sce:YBL102W"/>
<dbReference type="AGR" id="SGD:S000000198"/>
<dbReference type="SGD" id="S000000198">
    <property type="gene designation" value="SFT2"/>
</dbReference>
<dbReference type="VEuPathDB" id="FungiDB:YBL102W"/>
<dbReference type="eggNOG" id="KOG2887">
    <property type="taxonomic scope" value="Eukaryota"/>
</dbReference>
<dbReference type="GeneTree" id="ENSGT00390000018525"/>
<dbReference type="HOGENOM" id="CLU_099529_3_0_1"/>
<dbReference type="InParanoid" id="P38166"/>
<dbReference type="OMA" id="GLMFFTR"/>
<dbReference type="OrthoDB" id="660759at2759"/>
<dbReference type="BioCyc" id="YEAST:G3O-28986-MONOMER"/>
<dbReference type="BioGRID-ORCS" id="852172">
    <property type="hits" value="1 hit in 10 CRISPR screens"/>
</dbReference>
<dbReference type="PRO" id="PR:P38166"/>
<dbReference type="Proteomes" id="UP000002311">
    <property type="component" value="Chromosome II"/>
</dbReference>
<dbReference type="RNAct" id="P38166">
    <property type="molecule type" value="protein"/>
</dbReference>
<dbReference type="GO" id="GO:0005829">
    <property type="term" value="C:cytosol"/>
    <property type="evidence" value="ECO:0007669"/>
    <property type="project" value="GOC"/>
</dbReference>
<dbReference type="GO" id="GO:0000139">
    <property type="term" value="C:Golgi membrane"/>
    <property type="evidence" value="ECO:0000314"/>
    <property type="project" value="SGD"/>
</dbReference>
<dbReference type="GO" id="GO:0000138">
    <property type="term" value="C:Golgi trans cisterna"/>
    <property type="evidence" value="ECO:0000314"/>
    <property type="project" value="SGD"/>
</dbReference>
<dbReference type="GO" id="GO:0015031">
    <property type="term" value="P:protein transport"/>
    <property type="evidence" value="ECO:0007669"/>
    <property type="project" value="UniProtKB-KW"/>
</dbReference>
<dbReference type="GO" id="GO:0042147">
    <property type="term" value="P:retrograde transport, endosome to Golgi"/>
    <property type="evidence" value="ECO:0000316"/>
    <property type="project" value="SGD"/>
</dbReference>
<dbReference type="InterPro" id="IPR007305">
    <property type="entry name" value="Vesicle_transpt_Got1/SFT2"/>
</dbReference>
<dbReference type="InterPro" id="IPR011691">
    <property type="entry name" value="Vesicle_transpt_SFT2"/>
</dbReference>
<dbReference type="PANTHER" id="PTHR23137:SF36">
    <property type="entry name" value="VESICLE TRANSPORT PROTEIN SFT2C"/>
    <property type="match status" value="1"/>
</dbReference>
<dbReference type="PANTHER" id="PTHR23137">
    <property type="entry name" value="VESICLE TRANSPORT PROTEIN-RELATED"/>
    <property type="match status" value="1"/>
</dbReference>
<dbReference type="Pfam" id="PF04178">
    <property type="entry name" value="Got1"/>
    <property type="match status" value="1"/>
</dbReference>
<proteinExistence type="evidence at protein level"/>
<evidence type="ECO:0000255" key="1"/>
<evidence type="ECO:0000269" key="2">
    <source>
    </source>
</evidence>
<evidence type="ECO:0000269" key="3">
    <source>
    </source>
</evidence>
<evidence type="ECO:0000305" key="4"/>
<evidence type="ECO:0007744" key="5">
    <source>
    </source>
</evidence>
<evidence type="ECO:0007744" key="6">
    <source>
    </source>
</evidence>
<keyword id="KW-0007">Acetylation</keyword>
<keyword id="KW-0333">Golgi apparatus</keyword>
<keyword id="KW-0472">Membrane</keyword>
<keyword id="KW-0597">Phosphoprotein</keyword>
<keyword id="KW-0653">Protein transport</keyword>
<keyword id="KW-1185">Reference proteome</keyword>
<keyword id="KW-0812">Transmembrane</keyword>
<keyword id="KW-1133">Transmembrane helix</keyword>
<keyword id="KW-0813">Transport</keyword>